<dbReference type="EC" id="7.2.1.1" evidence="1"/>
<dbReference type="EMBL" id="CP000934">
    <property type="protein sequence ID" value="ACE83676.1"/>
    <property type="molecule type" value="Genomic_DNA"/>
</dbReference>
<dbReference type="RefSeq" id="WP_012487385.1">
    <property type="nucleotide sequence ID" value="NC_010995.1"/>
</dbReference>
<dbReference type="SMR" id="B3PFQ2"/>
<dbReference type="STRING" id="498211.CJA_1765"/>
<dbReference type="KEGG" id="cja:CJA_1765"/>
<dbReference type="eggNOG" id="COG1726">
    <property type="taxonomic scope" value="Bacteria"/>
</dbReference>
<dbReference type="HOGENOM" id="CLU_046656_0_0_6"/>
<dbReference type="OrthoDB" id="9774536at2"/>
<dbReference type="Proteomes" id="UP000001036">
    <property type="component" value="Chromosome"/>
</dbReference>
<dbReference type="GO" id="GO:0016655">
    <property type="term" value="F:oxidoreductase activity, acting on NAD(P)H, quinone or similar compound as acceptor"/>
    <property type="evidence" value="ECO:0007669"/>
    <property type="project" value="UniProtKB-UniRule"/>
</dbReference>
<dbReference type="GO" id="GO:0006814">
    <property type="term" value="P:sodium ion transport"/>
    <property type="evidence" value="ECO:0007669"/>
    <property type="project" value="UniProtKB-UniRule"/>
</dbReference>
<dbReference type="HAMAP" id="MF_00425">
    <property type="entry name" value="NqrA"/>
    <property type="match status" value="1"/>
</dbReference>
<dbReference type="InterPro" id="IPR008703">
    <property type="entry name" value="NqrA"/>
</dbReference>
<dbReference type="InterPro" id="IPR056148">
    <property type="entry name" value="NQRA_2nd"/>
</dbReference>
<dbReference type="InterPro" id="IPR022615">
    <property type="entry name" value="NqrA_C_domain"/>
</dbReference>
<dbReference type="InterPro" id="IPR056147">
    <property type="entry name" value="NQRA_N"/>
</dbReference>
<dbReference type="NCBIfam" id="TIGR01936">
    <property type="entry name" value="nqrA"/>
    <property type="match status" value="1"/>
</dbReference>
<dbReference type="NCBIfam" id="NF003759">
    <property type="entry name" value="PRK05352.1-2"/>
    <property type="match status" value="1"/>
</dbReference>
<dbReference type="PANTHER" id="PTHR37839">
    <property type="entry name" value="NA(+)-TRANSLOCATING NADH-QUINONE REDUCTASE SUBUNIT A"/>
    <property type="match status" value="1"/>
</dbReference>
<dbReference type="PANTHER" id="PTHR37839:SF1">
    <property type="entry name" value="NA(+)-TRANSLOCATING NADH-QUINONE REDUCTASE SUBUNIT A"/>
    <property type="match status" value="1"/>
</dbReference>
<dbReference type="Pfam" id="PF24836">
    <property type="entry name" value="NQRA_2nd"/>
    <property type="match status" value="1"/>
</dbReference>
<dbReference type="Pfam" id="PF05896">
    <property type="entry name" value="NQRA_N"/>
    <property type="match status" value="1"/>
</dbReference>
<dbReference type="Pfam" id="PF11973">
    <property type="entry name" value="NQRA_SLBB"/>
    <property type="match status" value="1"/>
</dbReference>
<comment type="function">
    <text evidence="1">NQR complex catalyzes the reduction of ubiquinone-1 to ubiquinol by two successive reactions, coupled with the transport of Na(+) ions from the cytoplasm to the periplasm. NqrA to NqrE are probably involved in the second step, the conversion of ubisemiquinone to ubiquinol.</text>
</comment>
<comment type="catalytic activity">
    <reaction evidence="1">
        <text>a ubiquinone + n Na(+)(in) + NADH + H(+) = a ubiquinol + n Na(+)(out) + NAD(+)</text>
        <dbReference type="Rhea" id="RHEA:47748"/>
        <dbReference type="Rhea" id="RHEA-COMP:9565"/>
        <dbReference type="Rhea" id="RHEA-COMP:9566"/>
        <dbReference type="ChEBI" id="CHEBI:15378"/>
        <dbReference type="ChEBI" id="CHEBI:16389"/>
        <dbReference type="ChEBI" id="CHEBI:17976"/>
        <dbReference type="ChEBI" id="CHEBI:29101"/>
        <dbReference type="ChEBI" id="CHEBI:57540"/>
        <dbReference type="ChEBI" id="CHEBI:57945"/>
        <dbReference type="EC" id="7.2.1.1"/>
    </reaction>
</comment>
<comment type="subunit">
    <text evidence="1">Composed of six subunits; NqrA, NqrB, NqrC, NqrD, NqrE and NqrF.</text>
</comment>
<comment type="similarity">
    <text evidence="1">Belongs to the NqrA family.</text>
</comment>
<reference key="1">
    <citation type="journal article" date="2008" name="J. Bacteriol.">
        <title>Insights into plant cell wall degradation from the genome sequence of the soil bacterium Cellvibrio japonicus.</title>
        <authorList>
            <person name="DeBoy R.T."/>
            <person name="Mongodin E.F."/>
            <person name="Fouts D.E."/>
            <person name="Tailford L.E."/>
            <person name="Khouri H."/>
            <person name="Emerson J.B."/>
            <person name="Mohamoud Y."/>
            <person name="Watkins K."/>
            <person name="Henrissat B."/>
            <person name="Gilbert H.J."/>
            <person name="Nelson K.E."/>
        </authorList>
    </citation>
    <scope>NUCLEOTIDE SEQUENCE [LARGE SCALE GENOMIC DNA]</scope>
    <source>
        <strain>Ueda107</strain>
    </source>
</reference>
<evidence type="ECO:0000255" key="1">
    <source>
        <dbReference type="HAMAP-Rule" id="MF_00425"/>
    </source>
</evidence>
<gene>
    <name evidence="1" type="primary">nqrA</name>
    <name type="ordered locus">CJA_1765</name>
</gene>
<accession>B3PFQ2</accession>
<organism>
    <name type="scientific">Cellvibrio japonicus (strain Ueda107)</name>
    <name type="common">Pseudomonas fluorescens subsp. cellulosa</name>
    <dbReference type="NCBI Taxonomy" id="498211"/>
    <lineage>
        <taxon>Bacteria</taxon>
        <taxon>Pseudomonadati</taxon>
        <taxon>Pseudomonadota</taxon>
        <taxon>Gammaproteobacteria</taxon>
        <taxon>Cellvibrionales</taxon>
        <taxon>Cellvibrionaceae</taxon>
        <taxon>Cellvibrio</taxon>
    </lineage>
</organism>
<feature type="chain" id="PRO_1000124169" description="Na(+)-translocating NADH-quinone reductase subunit A">
    <location>
        <begin position="1"/>
        <end position="447"/>
    </location>
</feature>
<sequence>MIKIRRGLDLPINGKPNQSIEDGPQVRQVALIGFDYQGMKPTMAVKVGDRVKLGQELFADKKIEGVIYTSPASGVVSAIHRGDQRVFHSIVIDVEGDDALAFNQYAAADLAGLSAEQVQQNLVQSGLWTAFRTRPYSKSPTPGSKPHSIFVQAIDTNPLAADPAVIIAAKADAFANGLTLLARLTEGKVFVCQAEAANLPKGQGANIAYESFAGVHPAGNPGTHIHYLDPVSASKTVWTIGYQDVIAIGELFTTGRLNVERVVALAGPQVDRPRLVRTRLGANLDQLTQGQLKAGENRVISGSVFGGRRSFGNLTFLGRFHTQVSVLLEGREREMLHYLRAGFNKFSVMGIFISKLFPSKTFDFTTSTNGSERAMVPVGSYEKVMPLDILPTQLLRSLIVGDTETAQKLGCLELDEEDLALCTFVCPGKYEYGPILRNNLTRIENEG</sequence>
<proteinExistence type="inferred from homology"/>
<name>NQRA_CELJU</name>
<keyword id="KW-0406">Ion transport</keyword>
<keyword id="KW-0520">NAD</keyword>
<keyword id="KW-1185">Reference proteome</keyword>
<keyword id="KW-0915">Sodium</keyword>
<keyword id="KW-0739">Sodium transport</keyword>
<keyword id="KW-1278">Translocase</keyword>
<keyword id="KW-0813">Transport</keyword>
<keyword id="KW-0830">Ubiquinone</keyword>
<protein>
    <recommendedName>
        <fullName evidence="1">Na(+)-translocating NADH-quinone reductase subunit A</fullName>
        <shortName evidence="1">Na(+)-NQR subunit A</shortName>
        <shortName evidence="1">Na(+)-translocating NQR subunit A</shortName>
        <ecNumber evidence="1">7.2.1.1</ecNumber>
    </recommendedName>
    <alternativeName>
        <fullName evidence="1">NQR complex subunit A</fullName>
    </alternativeName>
    <alternativeName>
        <fullName evidence="1">NQR-1 subunit A</fullName>
    </alternativeName>
</protein>